<gene>
    <name type="ordered locus">SH0499</name>
</gene>
<keyword id="KW-0012">Acyltransferase</keyword>
<keyword id="KW-0677">Repeat</keyword>
<keyword id="KW-0808">Transferase</keyword>
<protein>
    <recommendedName>
        <fullName>Putative acetyltransferase SH0499</fullName>
        <ecNumber>2.3.1.-</ecNumber>
    </recommendedName>
</protein>
<comment type="similarity">
    <text evidence="1">Belongs to the transferase hexapeptide repeat family.</text>
</comment>
<sequence length="192" mass="21027">MTEKEKMLAHQWYDANFDKDLETERVRAKDLCFDFNQTRPSDDSRRQAILTELFGYTLENVAINSPFDTDYGWNVKLGKNVFVNSNCYFMDGGGITIGNDVFIGPSCGFYTAHHPLTPKERNAGLELAQPITIGNNIWFGGNVVVTPGVTIGDGSVIAAGSVVTKDVPPNSLVAGVPAKVIREINENDAPKN</sequence>
<dbReference type="EC" id="2.3.1.-"/>
<dbReference type="EMBL" id="AP006716">
    <property type="protein sequence ID" value="BAE03808.1"/>
    <property type="molecule type" value="Genomic_DNA"/>
</dbReference>
<dbReference type="RefSeq" id="WP_011274824.1">
    <property type="nucleotide sequence ID" value="NC_007168.1"/>
</dbReference>
<dbReference type="SMR" id="Q4L967"/>
<dbReference type="KEGG" id="sha:SH0499"/>
<dbReference type="eggNOG" id="COG0110">
    <property type="taxonomic scope" value="Bacteria"/>
</dbReference>
<dbReference type="HOGENOM" id="CLU_051638_3_0_9"/>
<dbReference type="OrthoDB" id="9782926at2"/>
<dbReference type="Proteomes" id="UP000000543">
    <property type="component" value="Chromosome"/>
</dbReference>
<dbReference type="GO" id="GO:0005829">
    <property type="term" value="C:cytosol"/>
    <property type="evidence" value="ECO:0007669"/>
    <property type="project" value="TreeGrafter"/>
</dbReference>
<dbReference type="GO" id="GO:0016407">
    <property type="term" value="F:acetyltransferase activity"/>
    <property type="evidence" value="ECO:0007669"/>
    <property type="project" value="InterPro"/>
</dbReference>
<dbReference type="GO" id="GO:0008374">
    <property type="term" value="F:O-acyltransferase activity"/>
    <property type="evidence" value="ECO:0007669"/>
    <property type="project" value="TreeGrafter"/>
</dbReference>
<dbReference type="CDD" id="cd03357">
    <property type="entry name" value="LbH_MAT_GAT"/>
    <property type="match status" value="1"/>
</dbReference>
<dbReference type="FunFam" id="2.160.10.10:FF:000008">
    <property type="entry name" value="Maltose O-acetyltransferase"/>
    <property type="match status" value="1"/>
</dbReference>
<dbReference type="Gene3D" id="2.160.10.10">
    <property type="entry name" value="Hexapeptide repeat proteins"/>
    <property type="match status" value="1"/>
</dbReference>
<dbReference type="InterPro" id="IPR001451">
    <property type="entry name" value="Hexapep"/>
</dbReference>
<dbReference type="InterPro" id="IPR051159">
    <property type="entry name" value="Hexapeptide_acetyltransf"/>
</dbReference>
<dbReference type="InterPro" id="IPR024688">
    <property type="entry name" value="Mac_dom"/>
</dbReference>
<dbReference type="InterPro" id="IPR011004">
    <property type="entry name" value="Trimer_LpxA-like_sf"/>
</dbReference>
<dbReference type="PANTHER" id="PTHR23416:SF23">
    <property type="entry name" value="ACETYLTRANSFERASE C18B11.09C-RELATED"/>
    <property type="match status" value="1"/>
</dbReference>
<dbReference type="PANTHER" id="PTHR23416">
    <property type="entry name" value="SIALIC ACID SYNTHASE-RELATED"/>
    <property type="match status" value="1"/>
</dbReference>
<dbReference type="Pfam" id="PF14602">
    <property type="entry name" value="Hexapep_2"/>
    <property type="match status" value="2"/>
</dbReference>
<dbReference type="Pfam" id="PF12464">
    <property type="entry name" value="Mac"/>
    <property type="match status" value="1"/>
</dbReference>
<dbReference type="SMART" id="SM01266">
    <property type="entry name" value="Mac"/>
    <property type="match status" value="1"/>
</dbReference>
<dbReference type="SUPFAM" id="SSF51161">
    <property type="entry name" value="Trimeric LpxA-like enzymes"/>
    <property type="match status" value="1"/>
</dbReference>
<evidence type="ECO:0000305" key="1"/>
<reference key="1">
    <citation type="journal article" date="2005" name="J. Bacteriol.">
        <title>Whole-genome sequencing of Staphylococcus haemolyticus uncovers the extreme plasticity of its genome and the evolution of human-colonizing staphylococcal species.</title>
        <authorList>
            <person name="Takeuchi F."/>
            <person name="Watanabe S."/>
            <person name="Baba T."/>
            <person name="Yuzawa H."/>
            <person name="Ito T."/>
            <person name="Morimoto Y."/>
            <person name="Kuroda M."/>
            <person name="Cui L."/>
            <person name="Takahashi M."/>
            <person name="Ankai A."/>
            <person name="Baba S."/>
            <person name="Fukui S."/>
            <person name="Lee J.C."/>
            <person name="Hiramatsu K."/>
        </authorList>
    </citation>
    <scope>NUCLEOTIDE SEQUENCE [LARGE SCALE GENOMIC DNA]</scope>
    <source>
        <strain>JCSC1435</strain>
    </source>
</reference>
<name>ATRF2_STAHJ</name>
<proteinExistence type="inferred from homology"/>
<organism>
    <name type="scientific">Staphylococcus haemolyticus (strain JCSC1435)</name>
    <dbReference type="NCBI Taxonomy" id="279808"/>
    <lineage>
        <taxon>Bacteria</taxon>
        <taxon>Bacillati</taxon>
        <taxon>Bacillota</taxon>
        <taxon>Bacilli</taxon>
        <taxon>Bacillales</taxon>
        <taxon>Staphylococcaceae</taxon>
        <taxon>Staphylococcus</taxon>
    </lineage>
</organism>
<feature type="chain" id="PRO_0000068758" description="Putative acetyltransferase SH0499">
    <location>
        <begin position="1"/>
        <end position="192"/>
    </location>
</feature>
<accession>Q4L967</accession>